<comment type="function">
    <text>Insect and vertebrate active toxin. Binds at site 4 of mammalian voltage-gated sodium channels and shifts the activation voltage of the mammalian rNav1.2a (SCN2A) channel to more hyperpolarized voltages, whereas the insect channel, DmNav1 (para), is not affected. Causes temporary paralysis when injected into lepidopteran larvae at 8.6 nmol/g. A low intracranial injection dose into mice causes lacrimation, closure of the eyes and sweating. A high injection dose causes extensive lacrimation and death.</text>
</comment>
<comment type="subcellular location">
    <subcellularLocation>
        <location evidence="1">Secreted</location>
    </subcellularLocation>
</comment>
<comment type="tissue specificity">
    <text>Expressed by the venom gland.</text>
</comment>
<comment type="domain">
    <text evidence="1">The presence of a 'disulfide through disulfide knot' structurally defines this protein as a knottin.</text>
</comment>
<comment type="mass spectrometry"/>
<comment type="miscellaneous">
    <text>The primary structure of the mature toxin is identical to that of beta-hexatoxin-Mg1a (Magi-5) from Macrothele gigas (AC P83561).</text>
</comment>
<comment type="similarity">
    <text evidence="4">Belongs to the neurotoxin 15 family. 01 (magi-5) subfamily.</text>
</comment>
<feature type="peptide" id="PRO_0000044557" description="Beta-hexatoxin-Mr1a" evidence="3">
    <location>
        <begin position="1"/>
        <end position="29"/>
    </location>
</feature>
<feature type="disulfide bond" evidence="2">
    <location>
        <begin position="2"/>
        <end position="16"/>
    </location>
</feature>
<feature type="disulfide bond" evidence="2">
    <location>
        <begin position="9"/>
        <end position="21"/>
    </location>
</feature>
<feature type="disulfide bond" evidence="2">
    <location>
        <begin position="15"/>
        <end position="26"/>
    </location>
</feature>
<dbReference type="SMR" id="P61232"/>
<dbReference type="ArachnoServer" id="AS000417">
    <property type="toxin name" value="beta-hexatoxin-Mr1a"/>
</dbReference>
<dbReference type="GO" id="GO:0005576">
    <property type="term" value="C:extracellular region"/>
    <property type="evidence" value="ECO:0007669"/>
    <property type="project" value="UniProtKB-SubCell"/>
</dbReference>
<dbReference type="GO" id="GO:0019871">
    <property type="term" value="F:sodium channel inhibitor activity"/>
    <property type="evidence" value="ECO:0007669"/>
    <property type="project" value="InterPro"/>
</dbReference>
<dbReference type="GO" id="GO:0090729">
    <property type="term" value="F:toxin activity"/>
    <property type="evidence" value="ECO:0007669"/>
    <property type="project" value="UniProtKB-KW"/>
</dbReference>
<dbReference type="InterPro" id="IPR012628">
    <property type="entry name" value="Toxin_23"/>
</dbReference>
<dbReference type="Pfam" id="PF08093">
    <property type="entry name" value="Toxin_23"/>
    <property type="match status" value="1"/>
</dbReference>
<organism>
    <name type="scientific">Macrothele raveni</name>
    <name type="common">Funnel-web spider</name>
    <dbReference type="NCBI Taxonomy" id="269627"/>
    <lineage>
        <taxon>Eukaryota</taxon>
        <taxon>Metazoa</taxon>
        <taxon>Ecdysozoa</taxon>
        <taxon>Arthropoda</taxon>
        <taxon>Chelicerata</taxon>
        <taxon>Arachnida</taxon>
        <taxon>Araneae</taxon>
        <taxon>Mygalomorphae</taxon>
        <taxon>Macrothelidae</taxon>
        <taxon>Macrothele</taxon>
    </lineage>
</organism>
<protein>
    <recommendedName>
        <fullName>Beta-hexatoxin-Mr1a</fullName>
        <shortName>Beta-HXTX-Mr1a</shortName>
    </recommendedName>
    <alternativeName>
        <fullName>Raventoxin III</fullName>
    </alternativeName>
    <alternativeName>
        <fullName>Raventoxin-3</fullName>
    </alternativeName>
</protein>
<name>TXR3_MACRV</name>
<evidence type="ECO:0000250" key="1"/>
<evidence type="ECO:0000250" key="2">
    <source>
        <dbReference type="UniProtKB" id="P83561"/>
    </source>
</evidence>
<evidence type="ECO:0000269" key="3">
    <source>
    </source>
</evidence>
<evidence type="ECO:0000305" key="4"/>
<sequence>GCKLTFWKCKNKKECCGWNACALGICMPR</sequence>
<keyword id="KW-0903">Direct protein sequencing</keyword>
<keyword id="KW-1015">Disulfide bond</keyword>
<keyword id="KW-0872">Ion channel impairing toxin</keyword>
<keyword id="KW-0960">Knottin</keyword>
<keyword id="KW-0528">Neurotoxin</keyword>
<keyword id="KW-0964">Secreted</keyword>
<keyword id="KW-0800">Toxin</keyword>
<keyword id="KW-0738">Voltage-gated sodium channel impairing toxin</keyword>
<reference key="1">
    <citation type="journal article" date="2003" name="Toxicon">
        <title>Purification and characterization of raventoxin-I and raventoxin-III, two neurotoxic peptides from the venom of the spider Macrothele raveni.</title>
        <authorList>
            <person name="Zeng X.-Z."/>
            <person name="Xiao Q.-B."/>
            <person name="Liang S.-P."/>
        </authorList>
    </citation>
    <scope>PROTEIN SEQUENCE</scope>
    <scope>MASS SPECTROMETRY</scope>
    <source>
        <tissue>Venom</tissue>
    </source>
</reference>
<proteinExistence type="evidence at protein level"/>
<accession>P61232</accession>